<organism>
    <name type="scientific">Caenorhabditis elegans</name>
    <dbReference type="NCBI Taxonomy" id="6239"/>
    <lineage>
        <taxon>Eukaryota</taxon>
        <taxon>Metazoa</taxon>
        <taxon>Ecdysozoa</taxon>
        <taxon>Nematoda</taxon>
        <taxon>Chromadorea</taxon>
        <taxon>Rhabditida</taxon>
        <taxon>Rhabditina</taxon>
        <taxon>Rhabditomorpha</taxon>
        <taxon>Rhabditoidea</taxon>
        <taxon>Rhabditidae</taxon>
        <taxon>Peloderinae</taxon>
        <taxon>Caenorhabditis</taxon>
    </lineage>
</organism>
<feature type="chain" id="PRO_0000065078" description="Uncharacterized protein B0403.1">
    <location>
        <begin position="1"/>
        <end position="198"/>
    </location>
</feature>
<keyword id="KW-1185">Reference proteome</keyword>
<proteinExistence type="predicted"/>
<dbReference type="EMBL" id="FO080188">
    <property type="status" value="NOT_ANNOTATED_CDS"/>
    <property type="molecule type" value="Genomic_DNA"/>
</dbReference>
<dbReference type="PIR" id="T15353">
    <property type="entry name" value="T15353"/>
</dbReference>
<dbReference type="InParanoid" id="Q11075"/>
<dbReference type="Proteomes" id="UP000001940">
    <property type="component" value="Chromosome X"/>
</dbReference>
<dbReference type="PRINTS" id="PR01345">
    <property type="entry name" value="CERVTRCPTASE"/>
</dbReference>
<reference key="1">
    <citation type="journal article" date="1998" name="Science">
        <title>Genome sequence of the nematode C. elegans: a platform for investigating biology.</title>
        <authorList>
            <consortium name="The C. elegans sequencing consortium"/>
        </authorList>
    </citation>
    <scope>NUCLEOTIDE SEQUENCE [LARGE SCALE GENOMIC DNA]</scope>
    <source>
        <strain>Bristol N2</strain>
    </source>
</reference>
<sequence length="198" mass="23198">MPKIVIWNKVNDLDIFVDCKLNFQKHIEYVSNSAFLKCRQLLRCFRFTNVSLYFKLYNVYVQPLLNYGCEVYNPNSKRLIKLLEMPLKFYSRRVYQRCNVSNTSYDDRLAQSNQKSIQHQRILQILRTYHNILSGEYHFPDVSALKNSSAIPDSFFPKFGPFQLLTQLLPTSNPEYAQVLPNFSNSSVNSLARVLPKP</sequence>
<gene>
    <name type="ORF">B0403.1</name>
</gene>
<name>YWV1_CAEEL</name>
<accession>Q11075</accession>
<protein>
    <recommendedName>
        <fullName>Uncharacterized protein B0403.1</fullName>
    </recommendedName>
</protein>